<accession>G4YEI5</accession>
<sequence>MAALSSATKRLGRLIPHSSVLFVCDVQEVFRGLTFQLPTVIHGTNTMVSAAKLLNVPVVVTTQYGSRLGSTVSEISKNLEDAPDVKVFDKMKFSMLVPEVERHLTTNMPQRKSVLLCGIETHVCVLQTCLDLLDKGYDVHVVSDAVSSSTSYNRSMALERIRQSGAYITSVESAIFQLANDAGNPEFKSISKLIKEHLKVQNGFDTGARI</sequence>
<dbReference type="EC" id="3.3.2.1" evidence="1"/>
<dbReference type="EMBL" id="JH159151">
    <property type="protein sequence ID" value="EGZ27262.1"/>
    <property type="molecule type" value="Genomic_DNA"/>
</dbReference>
<dbReference type="RefSeq" id="XP_009514537.1">
    <property type="nucleotide sequence ID" value="XM_009516242.1"/>
</dbReference>
<dbReference type="SMR" id="G4YEI5"/>
<dbReference type="STRING" id="1094619.G4YEI5"/>
<dbReference type="EnsemblProtists" id="EGZ27262">
    <property type="protein sequence ID" value="EGZ27262"/>
    <property type="gene ID" value="PHYSODRAFT_467899"/>
</dbReference>
<dbReference type="GeneID" id="20653615"/>
<dbReference type="KEGG" id="psoj:PHYSODRAFT_467899"/>
<dbReference type="InParanoid" id="G4YEI5"/>
<dbReference type="OMA" id="HVCVFQT"/>
<dbReference type="Proteomes" id="UP000002640">
    <property type="component" value="Unassembled WGS sequence"/>
</dbReference>
<dbReference type="GO" id="GO:0005576">
    <property type="term" value="C:extracellular region"/>
    <property type="evidence" value="ECO:0007669"/>
    <property type="project" value="UniProtKB-SubCell"/>
</dbReference>
<dbReference type="GO" id="GO:0030430">
    <property type="term" value="C:host cell cytoplasm"/>
    <property type="evidence" value="ECO:0007669"/>
    <property type="project" value="UniProtKB-SubCell"/>
</dbReference>
<dbReference type="GO" id="GO:0042025">
    <property type="term" value="C:host cell nucleus"/>
    <property type="evidence" value="ECO:0007669"/>
    <property type="project" value="UniProtKB-SubCell"/>
</dbReference>
<dbReference type="GO" id="GO:0008908">
    <property type="term" value="F:isochorismatase activity"/>
    <property type="evidence" value="ECO:0007669"/>
    <property type="project" value="UniProtKB-EC"/>
</dbReference>
<dbReference type="CDD" id="cd01012">
    <property type="entry name" value="YcaC_related"/>
    <property type="match status" value="1"/>
</dbReference>
<dbReference type="Gene3D" id="3.40.50.850">
    <property type="entry name" value="Isochorismatase-like"/>
    <property type="match status" value="1"/>
</dbReference>
<dbReference type="InterPro" id="IPR000868">
    <property type="entry name" value="Isochorismatase-like_dom"/>
</dbReference>
<dbReference type="InterPro" id="IPR036380">
    <property type="entry name" value="Isochorismatase-like_sf"/>
</dbReference>
<dbReference type="InterPro" id="IPR050993">
    <property type="entry name" value="Isochorismatase_domain"/>
</dbReference>
<dbReference type="PANTHER" id="PTHR14119">
    <property type="entry name" value="HYDROLASE"/>
    <property type="match status" value="1"/>
</dbReference>
<dbReference type="PANTHER" id="PTHR14119:SF3">
    <property type="entry name" value="ISOCHORISMATASE DOMAIN-CONTAINING PROTEIN 2"/>
    <property type="match status" value="1"/>
</dbReference>
<dbReference type="Pfam" id="PF00857">
    <property type="entry name" value="Isochorismatase"/>
    <property type="match status" value="1"/>
</dbReference>
<dbReference type="SUPFAM" id="SSF52499">
    <property type="entry name" value="Isochorismatase-like hydrolases"/>
    <property type="match status" value="1"/>
</dbReference>
<organism>
    <name type="scientific">Phytophthora sojae (strain P6497)</name>
    <name type="common">Soybean stem and root rot agent</name>
    <name type="synonym">Phytophthora megasperma f. sp. glycines</name>
    <dbReference type="NCBI Taxonomy" id="1094619"/>
    <lineage>
        <taxon>Eukaryota</taxon>
        <taxon>Sar</taxon>
        <taxon>Stramenopiles</taxon>
        <taxon>Oomycota</taxon>
        <taxon>Peronosporales</taxon>
        <taxon>Peronosporaceae</taxon>
        <taxon>Phytophthora</taxon>
    </lineage>
</organism>
<proteinExistence type="evidence at protein level"/>
<feature type="chain" id="PRO_0000448092" description="Secreted isochorismatase effector Isc1">
    <location>
        <begin position="1"/>
        <end position="210"/>
    </location>
</feature>
<feature type="active site" evidence="1">
    <location>
        <position position="25"/>
    </location>
</feature>
<feature type="active site" evidence="1">
    <location>
        <position position="90"/>
    </location>
</feature>
<feature type="active site" evidence="1">
    <location>
        <position position="124"/>
    </location>
</feature>
<feature type="mutagenesis site" description="Impairs the isochorismatase activity and reduces the virulence; when associated with A-90 and A-124." evidence="1">
    <original>D</original>
    <variation>A</variation>
    <location>
        <position position="25"/>
    </location>
</feature>
<feature type="mutagenesis site" description="Impairs the isochorismatase activity and reduces the virulence; when associated with A-25 and A-124." evidence="1">
    <original>K</original>
    <variation>A</variation>
    <location>
        <position position="90"/>
    </location>
</feature>
<feature type="mutagenesis site" description="Impairs the isochorismatase activity and reduces the virulence; when associated with A-25 and A-90." evidence="1">
    <original>C</original>
    <variation>A</variation>
    <location>
        <position position="124"/>
    </location>
</feature>
<reference key="1">
    <citation type="journal article" date="2006" name="Science">
        <title>Phytophthora genome sequences uncover evolutionary origins and mechanisms of pathogenesis.</title>
        <authorList>
            <person name="Tyler B.M."/>
            <person name="Tripathy S."/>
            <person name="Zhang X."/>
            <person name="Dehal P."/>
            <person name="Jiang R.H.Y."/>
            <person name="Aerts A."/>
            <person name="Arredondo F.D."/>
            <person name="Baxter L."/>
            <person name="Bensasson D."/>
            <person name="Beynon J.L."/>
            <person name="Chapman J."/>
            <person name="Damasceno C.M.B."/>
            <person name="Dorrance A.E."/>
            <person name="Dou D."/>
            <person name="Dickerman A.W."/>
            <person name="Dubchak I.L."/>
            <person name="Garbelotto M."/>
            <person name="Gijzen M."/>
            <person name="Gordon S.G."/>
            <person name="Govers F."/>
            <person name="Grunwald N.J."/>
            <person name="Huang W."/>
            <person name="Ivors K.L."/>
            <person name="Jones R.W."/>
            <person name="Kamoun S."/>
            <person name="Krampis K."/>
            <person name="Lamour K.H."/>
            <person name="Lee M.-K."/>
            <person name="McDonald W.H."/>
            <person name="Medina M."/>
            <person name="Meijer H.J.G."/>
            <person name="Nordberg E.K."/>
            <person name="Maclean D.J."/>
            <person name="Ospina-Giraldo M.D."/>
            <person name="Morris P.F."/>
            <person name="Phuntumart V."/>
            <person name="Putnam N.H."/>
            <person name="Rash S."/>
            <person name="Rose J.K.C."/>
            <person name="Sakihama Y."/>
            <person name="Salamov A.A."/>
            <person name="Savidor A."/>
            <person name="Scheuring C.F."/>
            <person name="Smith B.M."/>
            <person name="Sobral B.W.S."/>
            <person name="Terry A."/>
            <person name="Torto-Alalibo T.A."/>
            <person name="Win J."/>
            <person name="Xu Z."/>
            <person name="Zhang H."/>
            <person name="Grigoriev I.V."/>
            <person name="Rokhsar D.S."/>
            <person name="Boore J.L."/>
        </authorList>
    </citation>
    <scope>NUCLEOTIDE SEQUENCE [LARGE SCALE GENOMIC DNA]</scope>
    <source>
        <strain>P6497</strain>
    </source>
</reference>
<reference key="2">
    <citation type="journal article" date="2014" name="Nat. Commun.">
        <title>Unconventionally secreted effectors of two filamentous pathogens target plant salicylate biosynthesis.</title>
        <authorList>
            <person name="Liu T."/>
            <person name="Song T."/>
            <person name="Zhang X."/>
            <person name="Yuan H."/>
            <person name="Su L."/>
            <person name="Li W."/>
            <person name="Xu J."/>
            <person name="Liu S."/>
            <person name="Chen L."/>
            <person name="Chen T."/>
            <person name="Zhang M."/>
            <person name="Gu L."/>
            <person name="Zhang B."/>
            <person name="Dou D."/>
        </authorList>
    </citation>
    <scope>INDUCTION</scope>
    <scope>DISRUPTION PHENOTYPE</scope>
    <scope>FUNCTION</scope>
    <scope>ACTIVE SITE</scope>
    <scope>MUTAGENESIS OF ASP-25; LYS-90 AND CYS-124</scope>
    <scope>CATALYTIC ACTIVITY</scope>
    <scope>SUBCELLULAR LOCATION</scope>
</reference>
<comment type="function">
    <text evidence="1">Secreted isochorismatase required for full virulence of P.sojae (PubMed:25156390). Suppresses salicylate-mediated innate immunity of the host by disrupting the plant salicylate metabolism pathway via hydrolysis of its isochorismate precursor (PubMed:25156390).</text>
</comment>
<comment type="catalytic activity">
    <reaction evidence="1">
        <text>isochorismate + H2O = (2S,3S)-2,3-dihydroxy-2,3-dihydrobenzoate + pyruvate</text>
        <dbReference type="Rhea" id="RHEA:11112"/>
        <dbReference type="ChEBI" id="CHEBI:15361"/>
        <dbReference type="ChEBI" id="CHEBI:15377"/>
        <dbReference type="ChEBI" id="CHEBI:29780"/>
        <dbReference type="ChEBI" id="CHEBI:58764"/>
        <dbReference type="EC" id="3.3.2.1"/>
    </reaction>
</comment>
<comment type="subcellular location">
    <subcellularLocation>
        <location evidence="1">Secreted</location>
    </subcellularLocation>
    <subcellularLocation>
        <location evidence="1">Host cytoplasm</location>
    </subcellularLocation>
    <subcellularLocation>
        <location evidence="1">Host nucleus</location>
    </subcellularLocation>
    <text evidence="1">Lacks a signal peptide and uses an unconventional secretion pathway for delivering effectors which plays an important role in host-pathogen interactions.</text>
</comment>
<comment type="induction">
    <text evidence="1">Expression is up-regulated during the infection stages.</text>
</comment>
<comment type="disruption phenotype">
    <text evidence="1">Leads to a significant reduction in virulence on soybean seedling and increases the concentrations of both free salicylate and its glucoside (SAG) by about 3-fold in soybean seedling.</text>
</comment>
<comment type="similarity">
    <text evidence="3">Belongs to the isochorismatase family.</text>
</comment>
<keyword id="KW-1035">Host cytoplasm</keyword>
<keyword id="KW-1048">Host nucleus</keyword>
<keyword id="KW-0378">Hydrolase</keyword>
<keyword id="KW-1185">Reference proteome</keyword>
<keyword id="KW-0964">Secreted</keyword>
<keyword id="KW-0843">Virulence</keyword>
<evidence type="ECO:0000269" key="1">
    <source>
    </source>
</evidence>
<evidence type="ECO:0000303" key="2">
    <source>
    </source>
</evidence>
<evidence type="ECO:0000305" key="3"/>
<name>ISC1_PHYSP</name>
<protein>
    <recommendedName>
        <fullName evidence="2">Secreted isochorismatase effector Isc1</fullName>
        <ecNumber evidence="1">3.3.2.1</ecNumber>
    </recommendedName>
</protein>
<gene>
    <name evidence="2" type="primary">Isc1</name>
    <name type="ORF">PHYSODRAFT_467899</name>
</gene>